<keyword id="KW-0963">Cytoplasm</keyword>
<organism>
    <name type="scientific">Histophilus somni (strain 129Pt)</name>
    <name type="common">Haemophilus somnus</name>
    <dbReference type="NCBI Taxonomy" id="205914"/>
    <lineage>
        <taxon>Bacteria</taxon>
        <taxon>Pseudomonadati</taxon>
        <taxon>Pseudomonadota</taxon>
        <taxon>Gammaproteobacteria</taxon>
        <taxon>Pasteurellales</taxon>
        <taxon>Pasteurellaceae</taxon>
        <taxon>Histophilus</taxon>
    </lineage>
</organism>
<dbReference type="EMBL" id="CP000436">
    <property type="protein sequence ID" value="ABI24498.1"/>
    <property type="molecule type" value="Genomic_DNA"/>
</dbReference>
<dbReference type="SMR" id="Q0I1S4"/>
<dbReference type="KEGG" id="hso:HS_0220"/>
<dbReference type="eggNOG" id="COG0684">
    <property type="taxonomic scope" value="Bacteria"/>
</dbReference>
<dbReference type="HOGENOM" id="CLU_072626_4_0_6"/>
<dbReference type="GO" id="GO:0005737">
    <property type="term" value="C:cytoplasm"/>
    <property type="evidence" value="ECO:0007669"/>
    <property type="project" value="UniProtKB-SubCell"/>
</dbReference>
<dbReference type="GO" id="GO:0060698">
    <property type="term" value="F:endoribonuclease inhibitor activity"/>
    <property type="evidence" value="ECO:0007669"/>
    <property type="project" value="UniProtKB-UniRule"/>
</dbReference>
<dbReference type="GO" id="GO:0019899">
    <property type="term" value="F:enzyme binding"/>
    <property type="evidence" value="ECO:0007669"/>
    <property type="project" value="UniProtKB-UniRule"/>
</dbReference>
<dbReference type="GO" id="GO:0051252">
    <property type="term" value="P:regulation of RNA metabolic process"/>
    <property type="evidence" value="ECO:0007669"/>
    <property type="project" value="InterPro"/>
</dbReference>
<dbReference type="CDD" id="cd16841">
    <property type="entry name" value="RraA_family"/>
    <property type="match status" value="1"/>
</dbReference>
<dbReference type="Gene3D" id="3.50.30.40">
    <property type="entry name" value="Ribonuclease E inhibitor RraA/RraA-like"/>
    <property type="match status" value="1"/>
</dbReference>
<dbReference type="HAMAP" id="MF_00471">
    <property type="entry name" value="RraA"/>
    <property type="match status" value="1"/>
</dbReference>
<dbReference type="InterPro" id="IPR010203">
    <property type="entry name" value="RraA"/>
</dbReference>
<dbReference type="InterPro" id="IPR005493">
    <property type="entry name" value="RraA/RraA-like"/>
</dbReference>
<dbReference type="InterPro" id="IPR036704">
    <property type="entry name" value="RraA/RraA-like_sf"/>
</dbReference>
<dbReference type="InterPro" id="IPR014339">
    <property type="entry name" value="RraA_gpbac"/>
</dbReference>
<dbReference type="NCBIfam" id="TIGR01935">
    <property type="entry name" value="NOT-MenG"/>
    <property type="match status" value="1"/>
</dbReference>
<dbReference type="NCBIfam" id="NF006875">
    <property type="entry name" value="PRK09372.1"/>
    <property type="match status" value="1"/>
</dbReference>
<dbReference type="NCBIfam" id="TIGR02998">
    <property type="entry name" value="RraA_entero"/>
    <property type="match status" value="1"/>
</dbReference>
<dbReference type="PANTHER" id="PTHR33254">
    <property type="entry name" value="4-HYDROXY-4-METHYL-2-OXOGLUTARATE ALDOLASE 3-RELATED"/>
    <property type="match status" value="1"/>
</dbReference>
<dbReference type="PANTHER" id="PTHR33254:SF29">
    <property type="entry name" value="REGULATOR OF RIBONUCLEASE ACTIVITY A"/>
    <property type="match status" value="1"/>
</dbReference>
<dbReference type="Pfam" id="PF03737">
    <property type="entry name" value="RraA-like"/>
    <property type="match status" value="1"/>
</dbReference>
<dbReference type="SUPFAM" id="SSF89562">
    <property type="entry name" value="RraA-like"/>
    <property type="match status" value="1"/>
</dbReference>
<proteinExistence type="inferred from homology"/>
<sequence>MYIDTAELCDIYLDQIDVVEPIFSSFGGKSTFFGKITTIKCFENNGLISEILEENGEGRVLLIDGGGAVRRALIDANLAQLAADNGWEGIIVYGAIRQLQQLENINIGIQALAPIPVGSDEQSIGETDVPVNFGGVTFFPDDYVYADLTGIILSQEPLDLEEFDSL</sequence>
<feature type="chain" id="PRO_1000013843" description="Regulator of ribonuclease activity A">
    <location>
        <begin position="1"/>
        <end position="166"/>
    </location>
</feature>
<name>RRAA_HISS1</name>
<accession>Q0I1S4</accession>
<gene>
    <name evidence="1" type="primary">rraA</name>
    <name type="ordered locus">HS_0220</name>
</gene>
<protein>
    <recommendedName>
        <fullName evidence="1">Regulator of ribonuclease activity A</fullName>
    </recommendedName>
</protein>
<comment type="function">
    <text evidence="1">Globally modulates RNA abundance by binding to RNase E (Rne) and regulating its endonucleolytic activity. Can modulate Rne action in a substrate-dependent manner by altering the composition of the degradosome. Modulates RNA-binding and helicase activities of the degradosome.</text>
</comment>
<comment type="subunit">
    <text evidence="1">Homotrimer. Binds to both RNA-binding sites in the C-terminal region of Rne and to RhlB.</text>
</comment>
<comment type="subcellular location">
    <subcellularLocation>
        <location evidence="1">Cytoplasm</location>
    </subcellularLocation>
</comment>
<comment type="similarity">
    <text evidence="1">Belongs to the RraA family.</text>
</comment>
<evidence type="ECO:0000255" key="1">
    <source>
        <dbReference type="HAMAP-Rule" id="MF_00471"/>
    </source>
</evidence>
<reference key="1">
    <citation type="journal article" date="2007" name="J. Bacteriol.">
        <title>Complete genome sequence of Haemophilus somnus (Histophilus somni) strain 129Pt and comparison to Haemophilus ducreyi 35000HP and Haemophilus influenzae Rd.</title>
        <authorList>
            <person name="Challacombe J.F."/>
            <person name="Duncan A.J."/>
            <person name="Brettin T.S."/>
            <person name="Bruce D."/>
            <person name="Chertkov O."/>
            <person name="Detter J.C."/>
            <person name="Han C.S."/>
            <person name="Misra M."/>
            <person name="Richardson P."/>
            <person name="Tapia R."/>
            <person name="Thayer N."/>
            <person name="Xie G."/>
            <person name="Inzana T.J."/>
        </authorList>
    </citation>
    <scope>NUCLEOTIDE SEQUENCE [LARGE SCALE GENOMIC DNA]</scope>
    <source>
        <strain>129Pt</strain>
    </source>
</reference>